<dbReference type="EC" id="3.4.21.-" evidence="2"/>
<dbReference type="EMBL" id="AE013599">
    <property type="protein sequence ID" value="AAF59009.4"/>
    <property type="molecule type" value="Genomic_DNA"/>
</dbReference>
<dbReference type="EMBL" id="AE013599">
    <property type="protein sequence ID" value="ACL83076.1"/>
    <property type="molecule type" value="Genomic_DNA"/>
</dbReference>
<dbReference type="EMBL" id="AE013599">
    <property type="protein sequence ID" value="AHN56019.1"/>
    <property type="molecule type" value="Genomic_DNA"/>
</dbReference>
<dbReference type="EMBL" id="AY075422">
    <property type="protein sequence ID" value="AAL68238.1"/>
    <property type="molecule type" value="mRNA"/>
</dbReference>
<dbReference type="RefSeq" id="NP_001137622.1">
    <molecule id="B7YZU2-1"/>
    <property type="nucleotide sequence ID" value="NM_001144150.2"/>
</dbReference>
<dbReference type="RefSeq" id="NP_001286221.1">
    <molecule id="B7YZU2-3"/>
    <property type="nucleotide sequence ID" value="NM_001299292.1"/>
</dbReference>
<dbReference type="RefSeq" id="NP_610435.4">
    <molecule id="B7YZU2-2"/>
    <property type="nucleotide sequence ID" value="NM_136591.5"/>
</dbReference>
<dbReference type="SMR" id="B7YZU2"/>
<dbReference type="FunCoup" id="B7YZU2">
    <property type="interactions" value="16"/>
</dbReference>
<dbReference type="IntAct" id="B7YZU2">
    <property type="interactions" value="14"/>
</dbReference>
<dbReference type="STRING" id="7227.FBpp0271893"/>
<dbReference type="MEROPS" id="S01.B34"/>
<dbReference type="GlyCosmos" id="B7YZU2">
    <property type="glycosylation" value="4 sites, No reported glycans"/>
</dbReference>
<dbReference type="GlyGen" id="B7YZU2">
    <property type="glycosylation" value="7 sites"/>
</dbReference>
<dbReference type="PaxDb" id="7227-FBpp0271893"/>
<dbReference type="DNASU" id="35902"/>
<dbReference type="EnsemblMetazoa" id="FBtr0273384">
    <molecule id="B7YZU2-2"/>
    <property type="protein sequence ID" value="FBpp0271892"/>
    <property type="gene ID" value="FBgn0286782"/>
</dbReference>
<dbReference type="EnsemblMetazoa" id="FBtr0273385">
    <molecule id="B7YZU2-1"/>
    <property type="protein sequence ID" value="FBpp0271893"/>
    <property type="gene ID" value="FBgn0286782"/>
</dbReference>
<dbReference type="EnsemblMetazoa" id="FBtr0339307">
    <molecule id="B7YZU2-3"/>
    <property type="protein sequence ID" value="FBpp0308413"/>
    <property type="gene ID" value="FBgn0286782"/>
</dbReference>
<dbReference type="GeneID" id="35902"/>
<dbReference type="KEGG" id="dme:Dmel_CG8213"/>
<dbReference type="UCSC" id="CG8213-RB">
    <property type="organism name" value="d. melanogaster"/>
</dbReference>
<dbReference type="AGR" id="FB:FBgn0286782"/>
<dbReference type="CTD" id="35902"/>
<dbReference type="FlyBase" id="FBgn0286782">
    <property type="gene designation" value="flz"/>
</dbReference>
<dbReference type="VEuPathDB" id="VectorBase:FBgn0286782"/>
<dbReference type="eggNOG" id="KOG3627">
    <property type="taxonomic scope" value="Eukaryota"/>
</dbReference>
<dbReference type="GeneTree" id="ENSGT00940000164686"/>
<dbReference type="HOGENOM" id="CLU_252530_0_0_1"/>
<dbReference type="InParanoid" id="B7YZU2"/>
<dbReference type="OMA" id="EHTMPAT"/>
<dbReference type="OrthoDB" id="93664at2759"/>
<dbReference type="PhylomeDB" id="B7YZU2"/>
<dbReference type="Reactome" id="R-DME-977606">
    <property type="pathway name" value="Regulation of Complement cascade"/>
</dbReference>
<dbReference type="BioGRID-ORCS" id="35902">
    <property type="hits" value="0 hits in 1 CRISPR screen"/>
</dbReference>
<dbReference type="GenomeRNAi" id="35902"/>
<dbReference type="PRO" id="PR:B7YZU2"/>
<dbReference type="Proteomes" id="UP000000803">
    <property type="component" value="Chromosome 2R"/>
</dbReference>
<dbReference type="Bgee" id="FBgn0286782">
    <property type="expression patterns" value="Expressed in embryonic/larval epidermis (Drosophila) and 7 other cell types or tissues"/>
</dbReference>
<dbReference type="ExpressionAtlas" id="B7YZU2">
    <property type="expression patterns" value="baseline and differential"/>
</dbReference>
<dbReference type="GO" id="GO:0098595">
    <property type="term" value="C:perivitelline space"/>
    <property type="evidence" value="ECO:0007005"/>
    <property type="project" value="FlyBase"/>
</dbReference>
<dbReference type="GO" id="GO:0005886">
    <property type="term" value="C:plasma membrane"/>
    <property type="evidence" value="ECO:0007669"/>
    <property type="project" value="UniProtKB-SubCell"/>
</dbReference>
<dbReference type="GO" id="GO:0004252">
    <property type="term" value="F:serine-type endopeptidase activity"/>
    <property type="evidence" value="ECO:0000255"/>
    <property type="project" value="FlyBase"/>
</dbReference>
<dbReference type="GO" id="GO:0035149">
    <property type="term" value="P:lumen formation, open tracheal system"/>
    <property type="evidence" value="ECO:0000270"/>
    <property type="project" value="UniProtKB"/>
</dbReference>
<dbReference type="GO" id="GO:0006508">
    <property type="term" value="P:proteolysis"/>
    <property type="evidence" value="ECO:0000255"/>
    <property type="project" value="FlyBase"/>
</dbReference>
<dbReference type="GO" id="GO:0060439">
    <property type="term" value="P:trachea morphogenesis"/>
    <property type="evidence" value="ECO:0000315"/>
    <property type="project" value="UniProtKB"/>
</dbReference>
<dbReference type="CDD" id="cd00190">
    <property type="entry name" value="Tryp_SPc"/>
    <property type="match status" value="1"/>
</dbReference>
<dbReference type="FunFam" id="2.40.10.10:FF:000006">
    <property type="entry name" value="Serine proteinase stubble"/>
    <property type="match status" value="1"/>
</dbReference>
<dbReference type="Gene3D" id="2.40.10.10">
    <property type="entry name" value="Trypsin-like serine proteases"/>
    <property type="match status" value="1"/>
</dbReference>
<dbReference type="InterPro" id="IPR009003">
    <property type="entry name" value="Peptidase_S1_PA"/>
</dbReference>
<dbReference type="InterPro" id="IPR043504">
    <property type="entry name" value="Peptidase_S1_PA_chymotrypsin"/>
</dbReference>
<dbReference type="InterPro" id="IPR001314">
    <property type="entry name" value="Peptidase_S1A"/>
</dbReference>
<dbReference type="InterPro" id="IPR001254">
    <property type="entry name" value="Trypsin_dom"/>
</dbReference>
<dbReference type="InterPro" id="IPR018114">
    <property type="entry name" value="TRYPSIN_HIS"/>
</dbReference>
<dbReference type="InterPro" id="IPR033116">
    <property type="entry name" value="TRYPSIN_SER"/>
</dbReference>
<dbReference type="PANTHER" id="PTHR24253:SF145">
    <property type="entry name" value="SERINE PROTEASE FILZIG"/>
    <property type="match status" value="1"/>
</dbReference>
<dbReference type="PANTHER" id="PTHR24253">
    <property type="entry name" value="TRANSMEMBRANE PROTEASE SERINE"/>
    <property type="match status" value="1"/>
</dbReference>
<dbReference type="Pfam" id="PF00089">
    <property type="entry name" value="Trypsin"/>
    <property type="match status" value="1"/>
</dbReference>
<dbReference type="PRINTS" id="PR00722">
    <property type="entry name" value="CHYMOTRYPSIN"/>
</dbReference>
<dbReference type="SMART" id="SM00020">
    <property type="entry name" value="Tryp_SPc"/>
    <property type="match status" value="1"/>
</dbReference>
<dbReference type="SUPFAM" id="SSF50494">
    <property type="entry name" value="Trypsin-like serine proteases"/>
    <property type="match status" value="1"/>
</dbReference>
<dbReference type="PROSITE" id="PS50240">
    <property type="entry name" value="TRYPSIN_DOM"/>
    <property type="match status" value="1"/>
</dbReference>
<dbReference type="PROSITE" id="PS00134">
    <property type="entry name" value="TRYPSIN_HIS"/>
    <property type="match status" value="1"/>
</dbReference>
<dbReference type="PROSITE" id="PS00135">
    <property type="entry name" value="TRYPSIN_SER"/>
    <property type="match status" value="1"/>
</dbReference>
<feature type="chain" id="PRO_0000445007" description="Serine protease filzig" evidence="1">
    <location>
        <begin position="1"/>
        <end position="1693"/>
    </location>
</feature>
<feature type="topological domain" description="Cytoplasmic" evidence="7">
    <location>
        <begin position="1"/>
        <end position="47"/>
    </location>
</feature>
<feature type="transmembrane region" description="Helical; Signal-anchor for type II membrane protein" evidence="1">
    <location>
        <begin position="48"/>
        <end position="68"/>
    </location>
</feature>
<feature type="topological domain" description="Extracellular" evidence="7">
    <location>
        <begin position="69"/>
        <end position="1693"/>
    </location>
</feature>
<feature type="domain" description="Peptidase S1" evidence="2">
    <location>
        <begin position="1449"/>
        <end position="1691"/>
    </location>
</feature>
<feature type="region of interest" description="Disordered" evidence="4">
    <location>
        <begin position="170"/>
        <end position="198"/>
    </location>
</feature>
<feature type="region of interest" description="Disordered" evidence="4">
    <location>
        <begin position="212"/>
        <end position="321"/>
    </location>
</feature>
<feature type="region of interest" description="Disordered" evidence="4">
    <location>
        <begin position="352"/>
        <end position="465"/>
    </location>
</feature>
<feature type="region of interest" description="Disordered" evidence="4">
    <location>
        <begin position="477"/>
        <end position="524"/>
    </location>
</feature>
<feature type="region of interest" description="Disordered" evidence="4">
    <location>
        <begin position="615"/>
        <end position="635"/>
    </location>
</feature>
<feature type="region of interest" description="Disordered" evidence="4">
    <location>
        <begin position="752"/>
        <end position="1007"/>
    </location>
</feature>
<feature type="region of interest" description="Disordered" evidence="4">
    <location>
        <begin position="1057"/>
        <end position="1090"/>
    </location>
</feature>
<feature type="region of interest" description="Disordered" evidence="4">
    <location>
        <begin position="1297"/>
        <end position="1435"/>
    </location>
</feature>
<feature type="compositionally biased region" description="Polar residues" evidence="4">
    <location>
        <begin position="178"/>
        <end position="198"/>
    </location>
</feature>
<feature type="compositionally biased region" description="Polar residues" evidence="4">
    <location>
        <begin position="212"/>
        <end position="222"/>
    </location>
</feature>
<feature type="compositionally biased region" description="Low complexity" evidence="4">
    <location>
        <begin position="230"/>
        <end position="241"/>
    </location>
</feature>
<feature type="compositionally biased region" description="Low complexity" evidence="4">
    <location>
        <begin position="252"/>
        <end position="268"/>
    </location>
</feature>
<feature type="compositionally biased region" description="Polar residues" evidence="4">
    <location>
        <begin position="274"/>
        <end position="294"/>
    </location>
</feature>
<feature type="compositionally biased region" description="Low complexity" evidence="4">
    <location>
        <begin position="358"/>
        <end position="404"/>
    </location>
</feature>
<feature type="compositionally biased region" description="Low complexity" evidence="4">
    <location>
        <begin position="422"/>
        <end position="431"/>
    </location>
</feature>
<feature type="compositionally biased region" description="Low complexity" evidence="4">
    <location>
        <begin position="488"/>
        <end position="501"/>
    </location>
</feature>
<feature type="compositionally biased region" description="Polar residues" evidence="4">
    <location>
        <begin position="502"/>
        <end position="524"/>
    </location>
</feature>
<feature type="compositionally biased region" description="Polar residues" evidence="4">
    <location>
        <begin position="771"/>
        <end position="799"/>
    </location>
</feature>
<feature type="compositionally biased region" description="Basic residues" evidence="4">
    <location>
        <begin position="836"/>
        <end position="847"/>
    </location>
</feature>
<feature type="compositionally biased region" description="Polar residues" evidence="4">
    <location>
        <begin position="951"/>
        <end position="962"/>
    </location>
</feature>
<feature type="compositionally biased region" description="Polar residues" evidence="4">
    <location>
        <begin position="989"/>
        <end position="1000"/>
    </location>
</feature>
<feature type="compositionally biased region" description="Low complexity" evidence="4">
    <location>
        <begin position="1297"/>
        <end position="1307"/>
    </location>
</feature>
<feature type="compositionally biased region" description="Low complexity" evidence="4">
    <location>
        <begin position="1331"/>
        <end position="1353"/>
    </location>
</feature>
<feature type="compositionally biased region" description="Low complexity" evidence="4">
    <location>
        <begin position="1362"/>
        <end position="1376"/>
    </location>
</feature>
<feature type="compositionally biased region" description="Acidic residues" evidence="4">
    <location>
        <begin position="1380"/>
        <end position="1391"/>
    </location>
</feature>
<feature type="active site" description="Charge relay system" evidence="2">
    <location>
        <position position="1495"/>
    </location>
</feature>
<feature type="active site" description="Charge relay system" evidence="2">
    <location>
        <position position="1544"/>
    </location>
</feature>
<feature type="active site" description="Charge relay system" evidence="2">
    <location>
        <position position="1642"/>
    </location>
</feature>
<feature type="glycosylation site" description="N-linked (GlcNAc...) asparagine" evidence="3">
    <location>
        <position position="541"/>
    </location>
</feature>
<feature type="glycosylation site" description="N-linked (GlcNAc...) asparagine" evidence="3">
    <location>
        <position position="582"/>
    </location>
</feature>
<feature type="glycosylation site" description="N-linked (GlcNAc...) asparagine" evidence="3">
    <location>
        <position position="1215"/>
    </location>
</feature>
<feature type="glycosylation site" description="N-linked (GlcNAc...) asparagine" evidence="3">
    <location>
        <position position="1272"/>
    </location>
</feature>
<feature type="disulfide bond" evidence="2">
    <location>
        <begin position="1480"/>
        <end position="1496"/>
    </location>
</feature>
<feature type="disulfide bond" evidence="2">
    <location>
        <begin position="1608"/>
        <end position="1627"/>
    </location>
</feature>
<feature type="disulfide bond" evidence="2">
    <location>
        <begin position="1638"/>
        <end position="1667"/>
    </location>
</feature>
<feature type="splice variant" id="VSP_059688" description="In isoform B." evidence="7">
    <original>HSTSRTLPTPNLAFHSPSTE</original>
    <variation>Q</variation>
    <location>
        <begin position="1418"/>
        <end position="1437"/>
    </location>
</feature>
<feature type="splice variant" id="VSP_059689" description="In isoform D." evidence="7">
    <original>HSTSRTLPTPNLA</original>
    <variation>PRRKHKRRNQKTT</variation>
    <location>
        <begin position="1418"/>
        <end position="1430"/>
    </location>
</feature>
<feature type="splice variant" id="VSP_059690" description="In isoform D." evidence="7">
    <location>
        <begin position="1431"/>
        <end position="1693"/>
    </location>
</feature>
<evidence type="ECO:0000255" key="1"/>
<evidence type="ECO:0000255" key="2">
    <source>
        <dbReference type="PROSITE-ProRule" id="PRU00274"/>
    </source>
</evidence>
<evidence type="ECO:0000255" key="3">
    <source>
        <dbReference type="PROSITE-ProRule" id="PRU00498"/>
    </source>
</evidence>
<evidence type="ECO:0000256" key="4">
    <source>
        <dbReference type="SAM" id="MobiDB-lite"/>
    </source>
</evidence>
<evidence type="ECO:0000269" key="5">
    <source>
    </source>
</evidence>
<evidence type="ECO:0000303" key="6">
    <source>
    </source>
</evidence>
<evidence type="ECO:0000305" key="7"/>
<evidence type="ECO:0000305" key="8">
    <source>
    </source>
</evidence>
<evidence type="ECO:0000312" key="9">
    <source>
        <dbReference type="EMBL" id="AAL68238.1"/>
    </source>
</evidence>
<evidence type="ECO:0000312" key="10">
    <source>
        <dbReference type="FlyBase" id="FBgn0286782"/>
    </source>
</evidence>
<evidence type="ECO:0000312" key="11">
    <source>
        <dbReference type="Proteomes" id="UP000000803"/>
    </source>
</evidence>
<reference evidence="11" key="1">
    <citation type="journal article" date="2000" name="Science">
        <title>The genome sequence of Drosophila melanogaster.</title>
        <authorList>
            <person name="Adams M.D."/>
            <person name="Celniker S.E."/>
            <person name="Holt R.A."/>
            <person name="Evans C.A."/>
            <person name="Gocayne J.D."/>
            <person name="Amanatides P.G."/>
            <person name="Scherer S.E."/>
            <person name="Li P.W."/>
            <person name="Hoskins R.A."/>
            <person name="Galle R.F."/>
            <person name="George R.A."/>
            <person name="Lewis S.E."/>
            <person name="Richards S."/>
            <person name="Ashburner M."/>
            <person name="Henderson S.N."/>
            <person name="Sutton G.G."/>
            <person name="Wortman J.R."/>
            <person name="Yandell M.D."/>
            <person name="Zhang Q."/>
            <person name="Chen L.X."/>
            <person name="Brandon R.C."/>
            <person name="Rogers Y.-H.C."/>
            <person name="Blazej R.G."/>
            <person name="Champe M."/>
            <person name="Pfeiffer B.D."/>
            <person name="Wan K.H."/>
            <person name="Doyle C."/>
            <person name="Baxter E.G."/>
            <person name="Helt G."/>
            <person name="Nelson C.R."/>
            <person name="Miklos G.L.G."/>
            <person name="Abril J.F."/>
            <person name="Agbayani A."/>
            <person name="An H.-J."/>
            <person name="Andrews-Pfannkoch C."/>
            <person name="Baldwin D."/>
            <person name="Ballew R.M."/>
            <person name="Basu A."/>
            <person name="Baxendale J."/>
            <person name="Bayraktaroglu L."/>
            <person name="Beasley E.M."/>
            <person name="Beeson K.Y."/>
            <person name="Benos P.V."/>
            <person name="Berman B.P."/>
            <person name="Bhandari D."/>
            <person name="Bolshakov S."/>
            <person name="Borkova D."/>
            <person name="Botchan M.R."/>
            <person name="Bouck J."/>
            <person name="Brokstein P."/>
            <person name="Brottier P."/>
            <person name="Burtis K.C."/>
            <person name="Busam D.A."/>
            <person name="Butler H."/>
            <person name="Cadieu E."/>
            <person name="Center A."/>
            <person name="Chandra I."/>
            <person name="Cherry J.M."/>
            <person name="Cawley S."/>
            <person name="Dahlke C."/>
            <person name="Davenport L.B."/>
            <person name="Davies P."/>
            <person name="de Pablos B."/>
            <person name="Delcher A."/>
            <person name="Deng Z."/>
            <person name="Mays A.D."/>
            <person name="Dew I."/>
            <person name="Dietz S.M."/>
            <person name="Dodson K."/>
            <person name="Doup L.E."/>
            <person name="Downes M."/>
            <person name="Dugan-Rocha S."/>
            <person name="Dunkov B.C."/>
            <person name="Dunn P."/>
            <person name="Durbin K.J."/>
            <person name="Evangelista C.C."/>
            <person name="Ferraz C."/>
            <person name="Ferriera S."/>
            <person name="Fleischmann W."/>
            <person name="Fosler C."/>
            <person name="Gabrielian A.E."/>
            <person name="Garg N.S."/>
            <person name="Gelbart W.M."/>
            <person name="Glasser K."/>
            <person name="Glodek A."/>
            <person name="Gong F."/>
            <person name="Gorrell J.H."/>
            <person name="Gu Z."/>
            <person name="Guan P."/>
            <person name="Harris M."/>
            <person name="Harris N.L."/>
            <person name="Harvey D.A."/>
            <person name="Heiman T.J."/>
            <person name="Hernandez J.R."/>
            <person name="Houck J."/>
            <person name="Hostin D."/>
            <person name="Houston K.A."/>
            <person name="Howland T.J."/>
            <person name="Wei M.-H."/>
            <person name="Ibegwam C."/>
            <person name="Jalali M."/>
            <person name="Kalush F."/>
            <person name="Karpen G.H."/>
            <person name="Ke Z."/>
            <person name="Kennison J.A."/>
            <person name="Ketchum K.A."/>
            <person name="Kimmel B.E."/>
            <person name="Kodira C.D."/>
            <person name="Kraft C.L."/>
            <person name="Kravitz S."/>
            <person name="Kulp D."/>
            <person name="Lai Z."/>
            <person name="Lasko P."/>
            <person name="Lei Y."/>
            <person name="Levitsky A.A."/>
            <person name="Li J.H."/>
            <person name="Li Z."/>
            <person name="Liang Y."/>
            <person name="Lin X."/>
            <person name="Liu X."/>
            <person name="Mattei B."/>
            <person name="McIntosh T.C."/>
            <person name="McLeod M.P."/>
            <person name="McPherson D."/>
            <person name="Merkulov G."/>
            <person name="Milshina N.V."/>
            <person name="Mobarry C."/>
            <person name="Morris J."/>
            <person name="Moshrefi A."/>
            <person name="Mount S.M."/>
            <person name="Moy M."/>
            <person name="Murphy B."/>
            <person name="Murphy L."/>
            <person name="Muzny D.M."/>
            <person name="Nelson D.L."/>
            <person name="Nelson D.R."/>
            <person name="Nelson K.A."/>
            <person name="Nixon K."/>
            <person name="Nusskern D.R."/>
            <person name="Pacleb J.M."/>
            <person name="Palazzolo M."/>
            <person name="Pittman G.S."/>
            <person name="Pan S."/>
            <person name="Pollard J."/>
            <person name="Puri V."/>
            <person name="Reese M.G."/>
            <person name="Reinert K."/>
            <person name="Remington K."/>
            <person name="Saunders R.D.C."/>
            <person name="Scheeler F."/>
            <person name="Shen H."/>
            <person name="Shue B.C."/>
            <person name="Siden-Kiamos I."/>
            <person name="Simpson M."/>
            <person name="Skupski M.P."/>
            <person name="Smith T.J."/>
            <person name="Spier E."/>
            <person name="Spradling A.C."/>
            <person name="Stapleton M."/>
            <person name="Strong R."/>
            <person name="Sun E."/>
            <person name="Svirskas R."/>
            <person name="Tector C."/>
            <person name="Turner R."/>
            <person name="Venter E."/>
            <person name="Wang A.H."/>
            <person name="Wang X."/>
            <person name="Wang Z.-Y."/>
            <person name="Wassarman D.A."/>
            <person name="Weinstock G.M."/>
            <person name="Weissenbach J."/>
            <person name="Williams S.M."/>
            <person name="Woodage T."/>
            <person name="Worley K.C."/>
            <person name="Wu D."/>
            <person name="Yang S."/>
            <person name="Yao Q.A."/>
            <person name="Ye J."/>
            <person name="Yeh R.-F."/>
            <person name="Zaveri J.S."/>
            <person name="Zhan M."/>
            <person name="Zhang G."/>
            <person name="Zhao Q."/>
            <person name="Zheng L."/>
            <person name="Zheng X.H."/>
            <person name="Zhong F.N."/>
            <person name="Zhong W."/>
            <person name="Zhou X."/>
            <person name="Zhu S.C."/>
            <person name="Zhu X."/>
            <person name="Smith H.O."/>
            <person name="Gibbs R.A."/>
            <person name="Myers E.W."/>
            <person name="Rubin G.M."/>
            <person name="Venter J.C."/>
        </authorList>
    </citation>
    <scope>NUCLEOTIDE SEQUENCE [LARGE SCALE GENOMIC DNA]</scope>
    <source>
        <strain evidence="11">Berkeley</strain>
    </source>
</reference>
<reference evidence="11" key="2">
    <citation type="journal article" date="2002" name="Genome Biol.">
        <title>Annotation of the Drosophila melanogaster euchromatic genome: a systematic review.</title>
        <authorList>
            <person name="Misra S."/>
            <person name="Crosby M.A."/>
            <person name="Mungall C.J."/>
            <person name="Matthews B.B."/>
            <person name="Campbell K.S."/>
            <person name="Hradecky P."/>
            <person name="Huang Y."/>
            <person name="Kaminker J.S."/>
            <person name="Millburn G.H."/>
            <person name="Prochnik S.E."/>
            <person name="Smith C.D."/>
            <person name="Tupy J.L."/>
            <person name="Whitfield E.J."/>
            <person name="Bayraktaroglu L."/>
            <person name="Berman B.P."/>
            <person name="Bettencourt B.R."/>
            <person name="Celniker S.E."/>
            <person name="de Grey A.D.N.J."/>
            <person name="Drysdale R.A."/>
            <person name="Harris N.L."/>
            <person name="Richter J."/>
            <person name="Russo S."/>
            <person name="Schroeder A.J."/>
            <person name="Shu S.Q."/>
            <person name="Stapleton M."/>
            <person name="Yamada C."/>
            <person name="Ashburner M."/>
            <person name="Gelbart W.M."/>
            <person name="Rubin G.M."/>
            <person name="Lewis S.E."/>
        </authorList>
    </citation>
    <scope>GENOME REANNOTATION</scope>
    <source>
        <strain evidence="11">Berkeley</strain>
    </source>
</reference>
<reference evidence="9" key="3">
    <citation type="journal article" date="2002" name="Genome Biol.">
        <title>A Drosophila full-length cDNA resource.</title>
        <authorList>
            <person name="Stapleton M."/>
            <person name="Carlson J.W."/>
            <person name="Brokstein P."/>
            <person name="Yu C."/>
            <person name="Champe M."/>
            <person name="George R.A."/>
            <person name="Guarin H."/>
            <person name="Kronmiller B."/>
            <person name="Pacleb J.M."/>
            <person name="Park S."/>
            <person name="Wan K.H."/>
            <person name="Rubin G.M."/>
            <person name="Celniker S.E."/>
        </authorList>
    </citation>
    <scope>NUCLEOTIDE SEQUENCE [LARGE SCALE MRNA] (ISOFORM B)</scope>
    <source>
        <strain evidence="9">Berkeley</strain>
        <tissue evidence="9">Embryo</tissue>
    </source>
</reference>
<reference evidence="7" key="4">
    <citation type="journal article" date="2018" name="PLoS Genet.">
        <title>An Ichor-dependent apical extracellular matrix regulates seamless tube shape and integrity.</title>
        <authorList>
            <person name="Rosa J.B."/>
            <person name="Metzstein M.M."/>
            <person name="Ghabrial A.S."/>
        </authorList>
    </citation>
    <scope>FUNCTION</scope>
    <scope>SUBCELLULAR LOCATION</scope>
    <scope>DEVELOPMENTAL STAGE</scope>
    <scope>DISRUPTION PHENOTYPE</scope>
</reference>
<name>LINT_DROME</name>
<proteinExistence type="evidence at transcript level"/>
<comment type="function">
    <text evidence="8">Probable endopeptidase. In tracheal terminal cells, acts downstream of ich to regulate seamless tube growth and/or maintenance probably by processing lumenal matrix proteins.</text>
</comment>
<comment type="subcellular location">
    <subcellularLocation>
        <location evidence="8">Cell membrane</location>
        <topology evidence="7">Single-pass type II membrane protein</topology>
    </subcellularLocation>
</comment>
<comment type="alternative products">
    <event type="alternative splicing"/>
    <isoform>
        <id>B7YZU2-1</id>
        <name evidence="10">C</name>
        <sequence type="displayed"/>
    </isoform>
    <isoform>
        <id>B7YZU2-2</id>
        <name evidence="10">B</name>
        <sequence type="described" ref="VSP_059688"/>
    </isoform>
    <isoform>
        <id>B7YZU2-3</id>
        <name evidence="10">D</name>
        <sequence type="described" ref="VSP_059689 VSP_059690"/>
    </isoform>
</comment>
<comment type="developmental stage">
    <text evidence="5">Detected in embryo at stage 13 in the posterior spiracles and foregut primordium. By stage 15, expressed specifically in epithelia secreting cuticle, including the trachea, foregut, hindgut and epidermis.</text>
</comment>
<comment type="disruption phenotype">
    <text evidence="5">Embryonic lethal. RNAi-mediated knockdown in tracheal terminal cells results in cystic dilations and discontinuities of the apical membrane; terminal cells are severely pruned with terminal branches largely devoid of lumenal membrane, except for isolated inclusions.</text>
</comment>
<comment type="similarity">
    <text evidence="2">Belongs to the peptidase S1 family.</text>
</comment>
<sequence length="1693" mass="182674">MFKWVTPASTATLSRCTLPATTAATTTTTAMAATRTATTTTRTTRPQLLSIALTSLIIIVASFVPTTSGFRSIETNGGGRKLFGGYRITPKHCRATKTLPSSDPRANGPTICMFNHECAQRGGEVVGACMDGFLFGACCQIPPTHELASTLINEAQNAYFQQHQQQTKLQQSAAQSSFESYGEQQQSLSEEQVAQQPSQNIYDQQNLDKVYQQLDSSSSISPPNGAYGDEPQQQEYQSESEQPVRDENAYPTSSSSTEATQSQSSSASVEFEQEPSQPADASNDQTTQKINKQPVQPPNFHVHKHSVTINSPSSPPQNDDFVMQVLSTLPPEHADDHHIVFTTEVPTKITSGLQDQTSSESNSFEEVSSTPAATQKPKPKPTQMPTQKTTQKATQKPTPKPTQKAKPKPVPQLAESMKRPIQQKPQQVAKPKPSPKPAQSTNNHHHNHLILDGGEFTHSDITHPGADADLVEDLQFSTGYGPQPVYAEPPKQQQQQQPAEQSYISSSTSAKRPTTGHNSPTTVSSITTHVDSIESIILQLNNTSHGPSYNVVSQQTPSYGYPGAAVVQTEPAAQNPTFYQENESEKVQESDSQSDYGYTTTVNYESFYDKVSDEQDASAAVSQSAEMPTARPGYGEDVSAVLEDHTMPANGYHDAEAPVAPQTSEFNKMPVMGIAYPVDMSYMEEEGNLPATAAGYGQMSSDSYEASTESTYQKLSTVQTEEPQPTYVRPTTNANKQNRPVASYIGMVTMQHYNPQPGNGDYQAQVPPEVSVSSHTTKVQEQMDETSNGYQQSETTSGYVSPPTAVPAPAQRPQYDAVQGDASSERPVLVTASPRPRPKPSTKRPAVKRPISGESTKKKPQPQPSAGAYNQEKISEHSTRKPVSNGYDKVPESPITHIQIKKPSATQHKEQEQTGYPRPASPAGYEQTTAAAPAPAAPSLNYDKPDAPPSQYDQPSAPSASYDQLAPMPSLNYNEQHASSPGRKPSTAKPISTSYVTGPSTPRPPATVDYHYDNVPPLFMADDKLDAFIQSTAENIVGSTPGNYQPPLVATASTPAYAHRPTSSGSYGHKKPGFVQINGTPKPPRPTVLITPKPTAINLVTYSSLSDDSNKLASSTSSYVTGRPGVQGVSSNDFKDPGYFGSSPVHVAFTQSTTEAVYAVPSDDKPAFPGYFGPTPSYPAFSVPGEKVGQNVMEETYTSPNDFVNFPPVRNPNLNMSAASSAVTSDLDLSTPAFVEDVVLKDKMHTLVHKLVASLQGNFEALADMIEEPGSNKTVATYQAGAGGTAKPVRVVTTRKPVRTATTTRPKVTTKKPVTRVTTKAPNKKTSAVSTTTRKPATRRTTVAAKVTTTTRRPATKKPTRRVSSTVKTTTVSSARPADDEIVDEEDEEDVNPNPSDNEIDQGATLSSYGGANGRKIHSTSRTLPTPNLAFHSPSTECGVRPHVKSGRIVGGKGSTFGAYPWQVLVRESTWLGLFTKNKCGGVLITSRYVITAAHCQPGFLASLVAVMGEFDISGDLESKRSVTKNVKRVIVHRQYDPATFENDLALLELDSPVQFDTHIVPICMPNDVADFTGRMATVTGWGRLKYGGGVPSVLQEVQVPIIENSVCQEMFHTAGHNKKILTSFLCAGYANGQKDSCEGDSGGPLVLQRPDGRYELAGTVSHGIKCAAPYLPGVYMRTTFYKPWLRSITGVK</sequence>
<accession>B7YZU2</accession>
<accession>A0A0B4LFV3</accession>
<accession>A1Z7M1</accession>
<accession>Q8SY35</accession>
<keyword id="KW-0025">Alternative splicing</keyword>
<keyword id="KW-1003">Cell membrane</keyword>
<keyword id="KW-1015">Disulfide bond</keyword>
<keyword id="KW-0325">Glycoprotein</keyword>
<keyword id="KW-0378">Hydrolase</keyword>
<keyword id="KW-0472">Membrane</keyword>
<keyword id="KW-0645">Protease</keyword>
<keyword id="KW-1185">Reference proteome</keyword>
<keyword id="KW-0720">Serine protease</keyword>
<keyword id="KW-0735">Signal-anchor</keyword>
<keyword id="KW-0812">Transmembrane</keyword>
<keyword id="KW-1133">Transmembrane helix</keyword>
<protein>
    <recommendedName>
        <fullName evidence="10">Serine protease filzig</fullName>
        <ecNumber evidence="2">3.4.21.-</ecNumber>
    </recommendedName>
    <alternativeName>
        <fullName evidence="6">Lumens interrupted</fullName>
    </alternativeName>
</protein>
<gene>
    <name evidence="10" type="primary">flz</name>
    <name evidence="6" type="synonym">lint</name>
    <name evidence="10" type="ORF">CG8213</name>
</gene>
<organism evidence="11">
    <name type="scientific">Drosophila melanogaster</name>
    <name type="common">Fruit fly</name>
    <dbReference type="NCBI Taxonomy" id="7227"/>
    <lineage>
        <taxon>Eukaryota</taxon>
        <taxon>Metazoa</taxon>
        <taxon>Ecdysozoa</taxon>
        <taxon>Arthropoda</taxon>
        <taxon>Hexapoda</taxon>
        <taxon>Insecta</taxon>
        <taxon>Pterygota</taxon>
        <taxon>Neoptera</taxon>
        <taxon>Endopterygota</taxon>
        <taxon>Diptera</taxon>
        <taxon>Brachycera</taxon>
        <taxon>Muscomorpha</taxon>
        <taxon>Ephydroidea</taxon>
        <taxon>Drosophilidae</taxon>
        <taxon>Drosophila</taxon>
        <taxon>Sophophora</taxon>
    </lineage>
</organism>